<protein>
    <recommendedName>
        <fullName evidence="1">Methionine import ATP-binding protein MetN</fullName>
        <ecNumber evidence="1">7.4.2.11</ecNumber>
    </recommendedName>
</protein>
<sequence>MIHIENLSKTYATPHGRFEALRGINLHIQQGEVFGIIGPSGAGKSTLVQCINLLERPDQGSIAIGGQALVGLGEAQLRNQRRRIGMVFQGFNLLARRTVYGNVALPLEIAGVARAEIPARVERLLALVGLEHLRDRYPSQISGGQKQRVGIARALANDPDVLLSDEATSALDPETTHNILALLRDINRKTGVTVVMITHQMEVVREICDRVAVLSHGEVVELGSTREVFAAPRHEVTRAMVSAATASDLSEATLAAVKQRIDALAAAEPGRAVRLWRLSLKGVAAGEPLWSDLAREFALDVSLVQARVEDIQGVAVGTLFVLAQGAPHAVKDALAALAAREITVEEIAHEPATDRSAYHVAA</sequence>
<gene>
    <name evidence="1" type="primary">metN</name>
    <name type="ordered locus">BP2816</name>
</gene>
<reference key="1">
    <citation type="journal article" date="2003" name="Nat. Genet.">
        <title>Comparative analysis of the genome sequences of Bordetella pertussis, Bordetella parapertussis and Bordetella bronchiseptica.</title>
        <authorList>
            <person name="Parkhill J."/>
            <person name="Sebaihia M."/>
            <person name="Preston A."/>
            <person name="Murphy L.D."/>
            <person name="Thomson N.R."/>
            <person name="Harris D.E."/>
            <person name="Holden M.T.G."/>
            <person name="Churcher C.M."/>
            <person name="Bentley S.D."/>
            <person name="Mungall K.L."/>
            <person name="Cerdeno-Tarraga A.-M."/>
            <person name="Temple L."/>
            <person name="James K.D."/>
            <person name="Harris B."/>
            <person name="Quail M.A."/>
            <person name="Achtman M."/>
            <person name="Atkin R."/>
            <person name="Baker S."/>
            <person name="Basham D."/>
            <person name="Bason N."/>
            <person name="Cherevach I."/>
            <person name="Chillingworth T."/>
            <person name="Collins M."/>
            <person name="Cronin A."/>
            <person name="Davis P."/>
            <person name="Doggett J."/>
            <person name="Feltwell T."/>
            <person name="Goble A."/>
            <person name="Hamlin N."/>
            <person name="Hauser H."/>
            <person name="Holroyd S."/>
            <person name="Jagels K."/>
            <person name="Leather S."/>
            <person name="Moule S."/>
            <person name="Norberczak H."/>
            <person name="O'Neil S."/>
            <person name="Ormond D."/>
            <person name="Price C."/>
            <person name="Rabbinowitsch E."/>
            <person name="Rutter S."/>
            <person name="Sanders M."/>
            <person name="Saunders D."/>
            <person name="Seeger K."/>
            <person name="Sharp S."/>
            <person name="Simmonds M."/>
            <person name="Skelton J."/>
            <person name="Squares R."/>
            <person name="Squares S."/>
            <person name="Stevens K."/>
            <person name="Unwin L."/>
            <person name="Whitehead S."/>
            <person name="Barrell B.G."/>
            <person name="Maskell D.J."/>
        </authorList>
    </citation>
    <scope>NUCLEOTIDE SEQUENCE [LARGE SCALE GENOMIC DNA]</scope>
    <source>
        <strain>Tohama I / ATCC BAA-589 / NCTC 13251</strain>
    </source>
</reference>
<feature type="chain" id="PRO_0000270255" description="Methionine import ATP-binding protein MetN">
    <location>
        <begin position="1"/>
        <end position="362"/>
    </location>
</feature>
<feature type="domain" description="ABC transporter" evidence="1">
    <location>
        <begin position="2"/>
        <end position="241"/>
    </location>
</feature>
<feature type="binding site" evidence="1">
    <location>
        <begin position="38"/>
        <end position="45"/>
    </location>
    <ligand>
        <name>ATP</name>
        <dbReference type="ChEBI" id="CHEBI:30616"/>
    </ligand>
</feature>
<proteinExistence type="inferred from homology"/>
<evidence type="ECO:0000255" key="1">
    <source>
        <dbReference type="HAMAP-Rule" id="MF_01719"/>
    </source>
</evidence>
<name>METN_BORPE</name>
<keyword id="KW-0029">Amino-acid transport</keyword>
<keyword id="KW-0067">ATP-binding</keyword>
<keyword id="KW-0997">Cell inner membrane</keyword>
<keyword id="KW-1003">Cell membrane</keyword>
<keyword id="KW-0472">Membrane</keyword>
<keyword id="KW-0547">Nucleotide-binding</keyword>
<keyword id="KW-1185">Reference proteome</keyword>
<keyword id="KW-1278">Translocase</keyword>
<keyword id="KW-0813">Transport</keyword>
<accession>Q7VV72</accession>
<comment type="function">
    <text evidence="1">Part of the ABC transporter complex MetNIQ involved in methionine import. Responsible for energy coupling to the transport system.</text>
</comment>
<comment type="catalytic activity">
    <reaction evidence="1">
        <text>L-methionine(out) + ATP + H2O = L-methionine(in) + ADP + phosphate + H(+)</text>
        <dbReference type="Rhea" id="RHEA:29779"/>
        <dbReference type="ChEBI" id="CHEBI:15377"/>
        <dbReference type="ChEBI" id="CHEBI:15378"/>
        <dbReference type="ChEBI" id="CHEBI:30616"/>
        <dbReference type="ChEBI" id="CHEBI:43474"/>
        <dbReference type="ChEBI" id="CHEBI:57844"/>
        <dbReference type="ChEBI" id="CHEBI:456216"/>
        <dbReference type="EC" id="7.4.2.11"/>
    </reaction>
</comment>
<comment type="catalytic activity">
    <reaction evidence="1">
        <text>D-methionine(out) + ATP + H2O = D-methionine(in) + ADP + phosphate + H(+)</text>
        <dbReference type="Rhea" id="RHEA:29767"/>
        <dbReference type="ChEBI" id="CHEBI:15377"/>
        <dbReference type="ChEBI" id="CHEBI:15378"/>
        <dbReference type="ChEBI" id="CHEBI:30616"/>
        <dbReference type="ChEBI" id="CHEBI:43474"/>
        <dbReference type="ChEBI" id="CHEBI:57932"/>
        <dbReference type="ChEBI" id="CHEBI:456216"/>
        <dbReference type="EC" id="7.4.2.11"/>
    </reaction>
</comment>
<comment type="subunit">
    <text evidence="1">The complex is composed of two ATP-binding proteins (MetN), two transmembrane proteins (MetI) and a solute-binding protein (MetQ).</text>
</comment>
<comment type="subcellular location">
    <subcellularLocation>
        <location evidence="1">Cell inner membrane</location>
        <topology evidence="1">Peripheral membrane protein</topology>
    </subcellularLocation>
</comment>
<comment type="similarity">
    <text evidence="1">Belongs to the ABC transporter superfamily. Methionine importer (TC 3.A.1.24) family.</text>
</comment>
<organism>
    <name type="scientific">Bordetella pertussis (strain Tohama I / ATCC BAA-589 / NCTC 13251)</name>
    <dbReference type="NCBI Taxonomy" id="257313"/>
    <lineage>
        <taxon>Bacteria</taxon>
        <taxon>Pseudomonadati</taxon>
        <taxon>Pseudomonadota</taxon>
        <taxon>Betaproteobacteria</taxon>
        <taxon>Burkholderiales</taxon>
        <taxon>Alcaligenaceae</taxon>
        <taxon>Bordetella</taxon>
    </lineage>
</organism>
<dbReference type="EC" id="7.4.2.11" evidence="1"/>
<dbReference type="EMBL" id="BX640419">
    <property type="protein sequence ID" value="CAE43089.1"/>
    <property type="molecule type" value="Genomic_DNA"/>
</dbReference>
<dbReference type="RefSeq" id="NP_881414.1">
    <property type="nucleotide sequence ID" value="NC_002929.2"/>
</dbReference>
<dbReference type="RefSeq" id="WP_003814544.1">
    <property type="nucleotide sequence ID" value="NZ_CP039022.1"/>
</dbReference>
<dbReference type="SMR" id="Q7VV72"/>
<dbReference type="STRING" id="257313.BP2816"/>
<dbReference type="PaxDb" id="257313-BP2816"/>
<dbReference type="KEGG" id="bpe:BP2816"/>
<dbReference type="PATRIC" id="fig|257313.5.peg.3041"/>
<dbReference type="eggNOG" id="COG1135">
    <property type="taxonomic scope" value="Bacteria"/>
</dbReference>
<dbReference type="HOGENOM" id="CLU_000604_1_3_4"/>
<dbReference type="Proteomes" id="UP000002676">
    <property type="component" value="Chromosome"/>
</dbReference>
<dbReference type="GO" id="GO:0005886">
    <property type="term" value="C:plasma membrane"/>
    <property type="evidence" value="ECO:0007669"/>
    <property type="project" value="UniProtKB-SubCell"/>
</dbReference>
<dbReference type="GO" id="GO:0033232">
    <property type="term" value="F:ABC-type D-methionine transporter activity"/>
    <property type="evidence" value="ECO:0007669"/>
    <property type="project" value="UniProtKB-EC"/>
</dbReference>
<dbReference type="GO" id="GO:0005524">
    <property type="term" value="F:ATP binding"/>
    <property type="evidence" value="ECO:0007669"/>
    <property type="project" value="UniProtKB-KW"/>
</dbReference>
<dbReference type="GO" id="GO:0016887">
    <property type="term" value="F:ATP hydrolysis activity"/>
    <property type="evidence" value="ECO:0007669"/>
    <property type="project" value="InterPro"/>
</dbReference>
<dbReference type="CDD" id="cd03258">
    <property type="entry name" value="ABC_MetN_methionine_transporter"/>
    <property type="match status" value="1"/>
</dbReference>
<dbReference type="FunFam" id="3.40.50.300:FF:000056">
    <property type="entry name" value="Cell division ATP-binding protein FtsE"/>
    <property type="match status" value="1"/>
</dbReference>
<dbReference type="Gene3D" id="3.30.70.260">
    <property type="match status" value="1"/>
</dbReference>
<dbReference type="Gene3D" id="3.40.50.300">
    <property type="entry name" value="P-loop containing nucleotide triphosphate hydrolases"/>
    <property type="match status" value="1"/>
</dbReference>
<dbReference type="InterPro" id="IPR003593">
    <property type="entry name" value="AAA+_ATPase"/>
</dbReference>
<dbReference type="InterPro" id="IPR003439">
    <property type="entry name" value="ABC_transporter-like_ATP-bd"/>
</dbReference>
<dbReference type="InterPro" id="IPR017871">
    <property type="entry name" value="ABC_transporter-like_CS"/>
</dbReference>
<dbReference type="InterPro" id="IPR045865">
    <property type="entry name" value="ACT-like_dom_sf"/>
</dbReference>
<dbReference type="InterPro" id="IPR041701">
    <property type="entry name" value="MetN_ABC"/>
</dbReference>
<dbReference type="InterPro" id="IPR050086">
    <property type="entry name" value="MetN_ABC_transporter-like"/>
</dbReference>
<dbReference type="InterPro" id="IPR018449">
    <property type="entry name" value="NIL_domain"/>
</dbReference>
<dbReference type="InterPro" id="IPR027417">
    <property type="entry name" value="P-loop_NTPase"/>
</dbReference>
<dbReference type="PANTHER" id="PTHR43166">
    <property type="entry name" value="AMINO ACID IMPORT ATP-BINDING PROTEIN"/>
    <property type="match status" value="1"/>
</dbReference>
<dbReference type="PANTHER" id="PTHR43166:SF30">
    <property type="entry name" value="METHIONINE IMPORT ATP-BINDING PROTEIN METN"/>
    <property type="match status" value="1"/>
</dbReference>
<dbReference type="Pfam" id="PF00005">
    <property type="entry name" value="ABC_tran"/>
    <property type="match status" value="1"/>
</dbReference>
<dbReference type="Pfam" id="PF09383">
    <property type="entry name" value="NIL"/>
    <property type="match status" value="1"/>
</dbReference>
<dbReference type="SMART" id="SM00382">
    <property type="entry name" value="AAA"/>
    <property type="match status" value="1"/>
</dbReference>
<dbReference type="SMART" id="SM00930">
    <property type="entry name" value="NIL"/>
    <property type="match status" value="1"/>
</dbReference>
<dbReference type="SUPFAM" id="SSF55021">
    <property type="entry name" value="ACT-like"/>
    <property type="match status" value="1"/>
</dbReference>
<dbReference type="SUPFAM" id="SSF52540">
    <property type="entry name" value="P-loop containing nucleoside triphosphate hydrolases"/>
    <property type="match status" value="1"/>
</dbReference>
<dbReference type="PROSITE" id="PS00211">
    <property type="entry name" value="ABC_TRANSPORTER_1"/>
    <property type="match status" value="1"/>
</dbReference>
<dbReference type="PROSITE" id="PS50893">
    <property type="entry name" value="ABC_TRANSPORTER_2"/>
    <property type="match status" value="1"/>
</dbReference>
<dbReference type="PROSITE" id="PS51264">
    <property type="entry name" value="METN"/>
    <property type="match status" value="1"/>
</dbReference>